<protein>
    <recommendedName>
        <fullName evidence="4">Terpene cyclase</fullName>
        <ecNumber evidence="6">5.4.99.-</ecNumber>
    </recommendedName>
    <alternativeName>
        <fullName evidence="4">Lanomycin biosynthesis cluster protein 5</fullName>
    </alternativeName>
</protein>
<reference key="1">
    <citation type="journal article" date="2021" name="J. Am. Chem. Soc.">
        <title>Targeted genome mining reveals the biosynthetic gene clusters of natural product CYP51 inhibitors.</title>
        <authorList>
            <person name="Liu N."/>
            <person name="Abramyan E.D."/>
            <person name="Cheng W."/>
            <person name="Perlatti B."/>
            <person name="Harvey C.J.B."/>
            <person name="Bills G.F."/>
            <person name="Tang Y."/>
        </authorList>
    </citation>
    <scope>NUCLEOTIDE SEQUENCE [GENOMIC DNA]</scope>
    <scope>FUNCTION</scope>
    <scope>PATHWAY</scope>
    <source>
        <strain>TTI-1096</strain>
    </source>
</reference>
<proteinExistence type="inferred from homology"/>
<name>LAN5_PYRDE</name>
<gene>
    <name evidence="4" type="primary">ORF5</name>
</gene>
<dbReference type="EC" id="5.4.99.-" evidence="6"/>
<dbReference type="EMBL" id="MW768702">
    <property type="protein sequence ID" value="QUF61545.1"/>
    <property type="molecule type" value="Genomic_DNA"/>
</dbReference>
<dbReference type="GO" id="GO:0016020">
    <property type="term" value="C:membrane"/>
    <property type="evidence" value="ECO:0007669"/>
    <property type="project" value="UniProtKB-SubCell"/>
</dbReference>
<dbReference type="GO" id="GO:0016853">
    <property type="term" value="F:isomerase activity"/>
    <property type="evidence" value="ECO:0007669"/>
    <property type="project" value="UniProtKB-KW"/>
</dbReference>
<keyword id="KW-0325">Glycoprotein</keyword>
<keyword id="KW-0413">Isomerase</keyword>
<keyword id="KW-0472">Membrane</keyword>
<keyword id="KW-0812">Transmembrane</keyword>
<keyword id="KW-1133">Transmembrane helix</keyword>
<organism>
    <name type="scientific">Pyrenophora dematioidea</name>
    <name type="common">Helminthosporium dematioideum</name>
    <dbReference type="NCBI Taxonomy" id="139229"/>
    <lineage>
        <taxon>Eukaryota</taxon>
        <taxon>Fungi</taxon>
        <taxon>Dikarya</taxon>
        <taxon>Ascomycota</taxon>
        <taxon>Pezizomycotina</taxon>
        <taxon>Dothideomycetes</taxon>
        <taxon>Pleosporomycetidae</taxon>
        <taxon>Pleosporales</taxon>
        <taxon>Pleosporineae</taxon>
        <taxon>Pleosporaceae</taxon>
        <taxon>Pyrenophora</taxon>
    </lineage>
</organism>
<comment type="function">
    <text evidence="3 5">Cyclase; part of the gene cluster that mediates the biosynthesis of the tetrahydropyranyl antifungal agent lanomycin that acts as an inhibitor of CYP51 and blocks the ergosterol biosynthesis (PubMed:33857369). The biosynthesis probably begins with the formation of an hexaketide, followed by methionine mediated alkylation of C-2 and C-6, and methylation of the reduced C-3 oxygen, pyran forming reductive ring closure, oxygenation of C-4, beta-keto reduction, enoyl reduction and dehydration of the remaining oxygens, and finally, acylation with glycine to complete the biosynthesis (Probable).</text>
</comment>
<comment type="pathway">
    <text evidence="6">Antifungal biosynthesis.</text>
</comment>
<comment type="subcellular location">
    <subcellularLocation>
        <location evidence="1">Membrane</location>
        <topology evidence="1">Multi-pass membrane protein</topology>
    </subcellularLocation>
</comment>
<comment type="similarity">
    <text evidence="5">Belongs to the membrane-bound ascI terpene cyclase family.</text>
</comment>
<sequence length="337" mass="37162">MLHSASVIFLSLSVLAAVGVWGPFVRDGGFDAMDAVVARHPSTGIPGLQHYPEFDRGLMSIVAFNLSAVNSIAYCFMMQFLANVAVIPVILCTEDSSAAPGSWVRYSTIWGLLSQLGTSAVIYPLYAMSFIRQSSREPSQTRQPMSDMALILNMAMGYALPAAITLNVLHSSLNMQIWGILAFTVYPICMKLMARIIKVFTGFRKFPTRSRHQSIPTLRYAVAGGVALQGHLWYLGTELGIFKGHTPSLSAEKMDSEGGARLVLRFLQVDYAITFLAMLLLAWHELIYHRILPAWRALGGLIIGWILVGPGATLAAAWYLRSRFIMAPGKRKKRYGD</sequence>
<accession>P0DXW1</accession>
<feature type="chain" id="PRO_0000461550" description="Terpene cyclase">
    <location>
        <begin position="1"/>
        <end position="337"/>
    </location>
</feature>
<feature type="transmembrane region" description="Helical" evidence="1">
    <location>
        <begin position="5"/>
        <end position="25"/>
    </location>
</feature>
<feature type="transmembrane region" description="Helical" evidence="1">
    <location>
        <begin position="72"/>
        <end position="92"/>
    </location>
</feature>
<feature type="transmembrane region" description="Helical" evidence="1">
    <location>
        <begin position="111"/>
        <end position="131"/>
    </location>
</feature>
<feature type="transmembrane region" description="Helical" evidence="1">
    <location>
        <begin position="149"/>
        <end position="169"/>
    </location>
</feature>
<feature type="transmembrane region" description="Helical" evidence="1">
    <location>
        <begin position="177"/>
        <end position="197"/>
    </location>
</feature>
<feature type="transmembrane region" description="Helical" evidence="1">
    <location>
        <begin position="222"/>
        <end position="242"/>
    </location>
</feature>
<feature type="transmembrane region" description="Helical" evidence="1">
    <location>
        <begin position="267"/>
        <end position="287"/>
    </location>
</feature>
<feature type="transmembrane region" description="Helical" evidence="1">
    <location>
        <begin position="298"/>
        <end position="318"/>
    </location>
</feature>
<feature type="glycosylation site" description="N-linked (GlcNAc...) asparagine" evidence="2">
    <location>
        <position position="65"/>
    </location>
</feature>
<evidence type="ECO:0000255" key="1"/>
<evidence type="ECO:0000255" key="2">
    <source>
        <dbReference type="PROSITE-ProRule" id="PRU00498"/>
    </source>
</evidence>
<evidence type="ECO:0000269" key="3">
    <source>
    </source>
</evidence>
<evidence type="ECO:0000303" key="4">
    <source>
    </source>
</evidence>
<evidence type="ECO:0000305" key="5"/>
<evidence type="ECO:0000305" key="6">
    <source>
    </source>
</evidence>